<gene>
    <name type="primary">PSG11</name>
    <name type="synonym">PSG13</name>
    <name type="synonym">PSG14</name>
</gene>
<dbReference type="EMBL" id="M69245">
    <property type="protein sequence ID" value="AAA36516.1"/>
    <property type="status" value="ALT_FRAME"/>
    <property type="molecule type" value="mRNA"/>
</dbReference>
<dbReference type="EMBL" id="U25988">
    <property type="protein sequence ID" value="AAA75299.1"/>
    <property type="status" value="ALT_FRAME"/>
    <property type="molecule type" value="mRNA"/>
</dbReference>
<dbReference type="EMBL" id="AC004784">
    <property type="status" value="NOT_ANNOTATED_CDS"/>
    <property type="molecule type" value="Genomic_DNA"/>
</dbReference>
<dbReference type="EMBL" id="AC005947">
    <property type="status" value="NOT_ANNOTATED_CDS"/>
    <property type="molecule type" value="Genomic_DNA"/>
</dbReference>
<dbReference type="EMBL" id="BC020711">
    <property type="protein sequence ID" value="AAH20711.2"/>
    <property type="status" value="ALT_INIT"/>
    <property type="molecule type" value="mRNA"/>
</dbReference>
<dbReference type="EMBL" id="AH007522">
    <property type="protein sequence ID" value="AAD21024.1"/>
    <property type="molecule type" value="Genomic_DNA"/>
</dbReference>
<dbReference type="EMBL" id="AF129398">
    <property type="protein sequence ID" value="AAD38357.1"/>
    <property type="molecule type" value="Genomic_DNA"/>
</dbReference>
<dbReference type="CCDS" id="CCDS12614.2">
    <molecule id="Q9UQ72-1"/>
</dbReference>
<dbReference type="CCDS" id="CCDS12615.2">
    <molecule id="Q9UQ72-2"/>
</dbReference>
<dbReference type="PIR" id="JC4122">
    <property type="entry name" value="JC4122"/>
</dbReference>
<dbReference type="PIR" id="JN0067">
    <property type="entry name" value="JN0067"/>
</dbReference>
<dbReference type="RefSeq" id="NP_001106881.1">
    <molecule id="Q9UQ72-2"/>
    <property type="nucleotide sequence ID" value="NM_001113410.2"/>
</dbReference>
<dbReference type="RefSeq" id="NP_002776.3">
    <molecule id="Q9UQ72-1"/>
    <property type="nucleotide sequence ID" value="NM_002785.2"/>
</dbReference>
<dbReference type="RefSeq" id="NP_976032.2">
    <molecule id="Q9UQ72-2"/>
    <property type="nucleotide sequence ID" value="NM_203287.2"/>
</dbReference>
<dbReference type="SMR" id="Q9UQ72"/>
<dbReference type="BioGRID" id="111653">
    <property type="interactions" value="74"/>
</dbReference>
<dbReference type="FunCoup" id="Q9UQ72">
    <property type="interactions" value="7"/>
</dbReference>
<dbReference type="IntAct" id="Q9UQ72">
    <property type="interactions" value="61"/>
</dbReference>
<dbReference type="STRING" id="9606.ENSP00000319140"/>
<dbReference type="GlyCosmos" id="Q9UQ72">
    <property type="glycosylation" value="3 sites, No reported glycans"/>
</dbReference>
<dbReference type="GlyGen" id="Q9UQ72">
    <property type="glycosylation" value="4 sites, 1 O-linked glycan (1 site)"/>
</dbReference>
<dbReference type="iPTMnet" id="Q9UQ72"/>
<dbReference type="PhosphoSitePlus" id="Q9UQ72"/>
<dbReference type="BioMuta" id="PSG11"/>
<dbReference type="DMDM" id="296452992"/>
<dbReference type="MassIVE" id="Q9UQ72"/>
<dbReference type="PaxDb" id="9606-ENSP00000319140"/>
<dbReference type="PeptideAtlas" id="Q9UQ72"/>
<dbReference type="ProteomicsDB" id="85512">
    <molecule id="Q9UQ72-1"/>
</dbReference>
<dbReference type="ProteomicsDB" id="85513">
    <molecule id="Q9UQ72-2"/>
</dbReference>
<dbReference type="Antibodypedia" id="35052">
    <property type="antibodies" value="55 antibodies from 13 providers"/>
</dbReference>
<dbReference type="DNASU" id="5680"/>
<dbReference type="Ensembl" id="ENST00000306322.7">
    <molecule id="Q9UQ72-2"/>
    <property type="protein sequence ID" value="ENSP00000304913.6"/>
    <property type="gene ID" value="ENSG00000243130.8"/>
</dbReference>
<dbReference type="Ensembl" id="ENST00000320078.12">
    <molecule id="Q9UQ72-1"/>
    <property type="protein sequence ID" value="ENSP00000319140.7"/>
    <property type="gene ID" value="ENSG00000243130.8"/>
</dbReference>
<dbReference type="Ensembl" id="ENST00000403486.5">
    <molecule id="Q9UQ72-2"/>
    <property type="protein sequence ID" value="ENSP00000385427.1"/>
    <property type="gene ID" value="ENSG00000243130.8"/>
</dbReference>
<dbReference type="GeneID" id="5680"/>
<dbReference type="KEGG" id="hsa:5680"/>
<dbReference type="MANE-Select" id="ENST00000320078.12">
    <property type="protein sequence ID" value="ENSP00000319140.7"/>
    <property type="RefSeq nucleotide sequence ID" value="NM_002785.3"/>
    <property type="RefSeq protein sequence ID" value="NP_002776.3"/>
</dbReference>
<dbReference type="UCSC" id="uc002ovm.2">
    <molecule id="Q9UQ72-1"/>
    <property type="organism name" value="human"/>
</dbReference>
<dbReference type="AGR" id="HGNC:9516"/>
<dbReference type="CTD" id="5680"/>
<dbReference type="DisGeNET" id="5680"/>
<dbReference type="GeneCards" id="PSG11"/>
<dbReference type="HGNC" id="HGNC:9516">
    <property type="gene designation" value="PSG11"/>
</dbReference>
<dbReference type="HPA" id="ENSG00000243130">
    <property type="expression patterns" value="Tissue enriched (placenta)"/>
</dbReference>
<dbReference type="MIM" id="176401">
    <property type="type" value="gene"/>
</dbReference>
<dbReference type="neXtProt" id="NX_Q9UQ72"/>
<dbReference type="OpenTargets" id="ENSG00000243130"/>
<dbReference type="PharmGKB" id="PA164742300"/>
<dbReference type="VEuPathDB" id="HostDB:ENSG00000243130"/>
<dbReference type="eggNOG" id="ENOG502RXPD">
    <property type="taxonomic scope" value="Eukaryota"/>
</dbReference>
<dbReference type="GeneTree" id="ENSGT01100000263479"/>
<dbReference type="HOGENOM" id="CLU_024555_5_0_1"/>
<dbReference type="InParanoid" id="Q9UQ72"/>
<dbReference type="OMA" id="IMDITHY"/>
<dbReference type="OrthoDB" id="6159398at2759"/>
<dbReference type="PAN-GO" id="Q9UQ72">
    <property type="GO annotations" value="2 GO annotations based on evolutionary models"/>
</dbReference>
<dbReference type="PhylomeDB" id="Q9UQ72"/>
<dbReference type="TreeFam" id="TF336859"/>
<dbReference type="PathwayCommons" id="Q9UQ72"/>
<dbReference type="Reactome" id="R-HSA-202733">
    <property type="pathway name" value="Cell surface interactions at the vascular wall"/>
</dbReference>
<dbReference type="SignaLink" id="Q9UQ72"/>
<dbReference type="BioGRID-ORCS" id="5680">
    <property type="hits" value="27 hits in 1065 CRISPR screens"/>
</dbReference>
<dbReference type="ChiTaRS" id="PSG11">
    <property type="organism name" value="human"/>
</dbReference>
<dbReference type="GenomeRNAi" id="5680"/>
<dbReference type="Pharos" id="Q9UQ72">
    <property type="development level" value="Tbio"/>
</dbReference>
<dbReference type="PRO" id="PR:Q9UQ72"/>
<dbReference type="Proteomes" id="UP000005640">
    <property type="component" value="Chromosome 19"/>
</dbReference>
<dbReference type="RNAct" id="Q9UQ72">
    <property type="molecule type" value="protein"/>
</dbReference>
<dbReference type="Bgee" id="ENSG00000243130">
    <property type="expression patterns" value="Expressed in endometrium epithelium and 108 other cell types or tissues"/>
</dbReference>
<dbReference type="ExpressionAtlas" id="Q9UQ72">
    <property type="expression patterns" value="baseline and differential"/>
</dbReference>
<dbReference type="GO" id="GO:0009986">
    <property type="term" value="C:cell surface"/>
    <property type="evidence" value="ECO:0000318"/>
    <property type="project" value="GO_Central"/>
</dbReference>
<dbReference type="GO" id="GO:0005576">
    <property type="term" value="C:extracellular region"/>
    <property type="evidence" value="ECO:0007669"/>
    <property type="project" value="UniProtKB-SubCell"/>
</dbReference>
<dbReference type="GO" id="GO:0007565">
    <property type="term" value="P:female pregnancy"/>
    <property type="evidence" value="ECO:0000304"/>
    <property type="project" value="ProtInc"/>
</dbReference>
<dbReference type="GO" id="GO:0007157">
    <property type="term" value="P:heterophilic cell-cell adhesion via plasma membrane cell adhesion molecules"/>
    <property type="evidence" value="ECO:0000318"/>
    <property type="project" value="GO_Central"/>
</dbReference>
<dbReference type="CDD" id="cd20948">
    <property type="entry name" value="IgC2_CEACAM5-like"/>
    <property type="match status" value="1"/>
</dbReference>
<dbReference type="CDD" id="cd05740">
    <property type="entry name" value="IgI_hCEACAM_2_4_6_like"/>
    <property type="match status" value="1"/>
</dbReference>
<dbReference type="CDD" id="cd05774">
    <property type="entry name" value="IgV_CEACAM_D1"/>
    <property type="match status" value="1"/>
</dbReference>
<dbReference type="FunFam" id="2.60.40.10:FF:000340">
    <property type="entry name" value="Carcinoembryonic antigen-related cell adhesion molecule 1"/>
    <property type="match status" value="1"/>
</dbReference>
<dbReference type="FunFam" id="2.60.40.10:FF:000517">
    <property type="entry name" value="Carcinoembryonic antigen-related cell adhesion molecule 1"/>
    <property type="match status" value="1"/>
</dbReference>
<dbReference type="FunFam" id="2.60.40.10:FF:000244">
    <property type="entry name" value="carcinoembryonic antigen-related cell adhesion molecule 16"/>
    <property type="match status" value="1"/>
</dbReference>
<dbReference type="Gene3D" id="2.60.40.10">
    <property type="entry name" value="Immunoglobulins"/>
    <property type="match status" value="3"/>
</dbReference>
<dbReference type="InterPro" id="IPR050831">
    <property type="entry name" value="CEA_cell_adhesion"/>
</dbReference>
<dbReference type="InterPro" id="IPR007110">
    <property type="entry name" value="Ig-like_dom"/>
</dbReference>
<dbReference type="InterPro" id="IPR036179">
    <property type="entry name" value="Ig-like_dom_sf"/>
</dbReference>
<dbReference type="InterPro" id="IPR013783">
    <property type="entry name" value="Ig-like_fold"/>
</dbReference>
<dbReference type="InterPro" id="IPR003599">
    <property type="entry name" value="Ig_sub"/>
</dbReference>
<dbReference type="InterPro" id="IPR003598">
    <property type="entry name" value="Ig_sub2"/>
</dbReference>
<dbReference type="InterPro" id="IPR013106">
    <property type="entry name" value="Ig_V-set"/>
</dbReference>
<dbReference type="PANTHER" id="PTHR44427">
    <property type="entry name" value="CARCINOEMBRYONIC ANTIGEN-RELATED CELL ADHESION MOLECULE 19"/>
    <property type="match status" value="1"/>
</dbReference>
<dbReference type="PANTHER" id="PTHR44427:SF32">
    <property type="entry name" value="IG-LIKE DOMAIN-CONTAINING PROTEIN"/>
    <property type="match status" value="1"/>
</dbReference>
<dbReference type="Pfam" id="PF13895">
    <property type="entry name" value="Ig_2"/>
    <property type="match status" value="1"/>
</dbReference>
<dbReference type="Pfam" id="PF13927">
    <property type="entry name" value="Ig_3"/>
    <property type="match status" value="1"/>
</dbReference>
<dbReference type="Pfam" id="PF07686">
    <property type="entry name" value="V-set"/>
    <property type="match status" value="1"/>
</dbReference>
<dbReference type="SMART" id="SM00409">
    <property type="entry name" value="IG"/>
    <property type="match status" value="3"/>
</dbReference>
<dbReference type="SMART" id="SM00408">
    <property type="entry name" value="IGc2"/>
    <property type="match status" value="2"/>
</dbReference>
<dbReference type="SUPFAM" id="SSF48726">
    <property type="entry name" value="Immunoglobulin"/>
    <property type="match status" value="3"/>
</dbReference>
<dbReference type="PROSITE" id="PS50835">
    <property type="entry name" value="IG_LIKE"/>
    <property type="match status" value="2"/>
</dbReference>
<comment type="interaction">
    <interactant intactId="EBI-21691855">
        <id>Q9UQ72-2</id>
    </interactant>
    <interactant intactId="EBI-740343">
        <id>Q93062-3</id>
        <label>RBPMS</label>
    </interactant>
    <organismsDiffer>false</organismsDiffer>
    <experiments>3</experiments>
</comment>
<comment type="subcellular location">
    <subcellularLocation>
        <location evidence="7">Secreted</location>
    </subcellularLocation>
</comment>
<comment type="alternative products">
    <event type="alternative splicing"/>
    <isoform>
        <id>Q9UQ72-1</id>
        <name>1</name>
        <sequence type="displayed"/>
    </isoform>
    <isoform>
        <id>Q9UQ72-2</id>
        <name>2</name>
        <sequence type="described" ref="VSP_007876"/>
    </isoform>
</comment>
<comment type="developmental stage">
    <text>PSBG are produced in high quantity during pregnancy.</text>
</comment>
<comment type="similarity">
    <text evidence="7">Belongs to the immunoglobulin superfamily. CEA family.</text>
</comment>
<comment type="sequence caution" evidence="7">
    <conflict type="frameshift">
        <sequence resource="EMBL-CDS" id="AAA36516"/>
    </conflict>
</comment>
<comment type="sequence caution" evidence="7">
    <conflict type="frameshift">
        <sequence resource="EMBL-CDS" id="AAA75299"/>
    </conflict>
</comment>
<comment type="sequence caution" evidence="7">
    <conflict type="erroneous initiation">
        <sequence resource="EMBL-CDS" id="AAH20711"/>
    </conflict>
    <text>Extended N-terminus.</text>
</comment>
<feature type="signal peptide" evidence="1">
    <location>
        <begin position="1"/>
        <end position="34"/>
    </location>
</feature>
<feature type="chain" id="PRO_0000014918" description="Pregnancy-specific beta-1-glycoprotein 11">
    <location>
        <begin position="35"/>
        <end position="335"/>
    </location>
</feature>
<feature type="domain" description="Ig-like V-type">
    <location>
        <begin position="35"/>
        <end position="144"/>
    </location>
</feature>
<feature type="domain" description="Ig-like C2-type 1">
    <location>
        <begin position="147"/>
        <end position="234"/>
    </location>
</feature>
<feature type="domain" description="Ig-like C2-type 2">
    <location>
        <begin position="242"/>
        <end position="317"/>
    </location>
</feature>
<feature type="short sequence motif" description="Cell attachment site" evidence="1">
    <location>
        <begin position="127"/>
        <end position="129"/>
    </location>
</feature>
<feature type="glycosylation site" description="N-linked (GlcNAc...) asparagine" evidence="1">
    <location>
        <position position="61"/>
    </location>
</feature>
<feature type="glycosylation site" description="N-linked (GlcNAc...) asparagine" evidence="1">
    <location>
        <position position="104"/>
    </location>
</feature>
<feature type="glycosylation site" description="N-linked (GlcNAc...) asparagine" evidence="1">
    <location>
        <position position="111"/>
    </location>
</feature>
<feature type="disulfide bond" evidence="2">
    <location>
        <begin position="169"/>
        <end position="217"/>
    </location>
</feature>
<feature type="disulfide bond" evidence="2">
    <location>
        <begin position="261"/>
        <end position="301"/>
    </location>
</feature>
<feature type="splice variant" id="VSP_007876" description="In isoform 2." evidence="6">
    <original>ALLLNFWNLPTTAQVMIEAQPPKVSEGKDVLLLVHNLPQNLTGYIWYKGQIRDLYHYITSYVVDGQIIIYGPAYSGRETVYSNASLLIQNVTREDAGSYTLHIIKRGDGTRGVTGYFTFTLYL</original>
    <variation>V</variation>
    <location>
        <begin position="22"/>
        <end position="144"/>
    </location>
</feature>
<feature type="sequence variant" id="VAR_061325" description="In dbSNP:rs2471952." evidence="5">
    <original>V</original>
    <variation>I</variation>
    <location>
        <position position="83"/>
    </location>
</feature>
<feature type="sequence variant" id="VAR_056076" description="In dbSNP:rs1058085.">
    <original>A</original>
    <variation>T</variation>
    <location>
        <position position="176"/>
    </location>
</feature>
<feature type="sequence variant" id="VAR_060365" description="In dbSNP:rs10414166." evidence="3 4">
    <original>N</original>
    <variation>D</variation>
    <location>
        <position position="264"/>
    </location>
</feature>
<feature type="sequence variant" id="VAR_061326" description="In dbSNP:rs10412348.">
    <original>E</original>
    <variation>K</variation>
    <location>
        <position position="310"/>
    </location>
</feature>
<organism>
    <name type="scientific">Homo sapiens</name>
    <name type="common">Human</name>
    <dbReference type="NCBI Taxonomy" id="9606"/>
    <lineage>
        <taxon>Eukaryota</taxon>
        <taxon>Metazoa</taxon>
        <taxon>Chordata</taxon>
        <taxon>Craniata</taxon>
        <taxon>Vertebrata</taxon>
        <taxon>Euteleostomi</taxon>
        <taxon>Mammalia</taxon>
        <taxon>Eutheria</taxon>
        <taxon>Euarchontoglires</taxon>
        <taxon>Primates</taxon>
        <taxon>Haplorrhini</taxon>
        <taxon>Catarrhini</taxon>
        <taxon>Hominidae</taxon>
        <taxon>Homo</taxon>
    </lineage>
</organism>
<protein>
    <recommendedName>
        <fullName>Pregnancy-specific beta-1-glycoprotein 11</fullName>
        <shortName>PS-beta-G-11</shortName>
        <shortName>PSBG-11</shortName>
        <shortName>Pregnancy-specific glycoprotein 11</shortName>
    </recommendedName>
    <alternativeName>
        <fullName>Pregnancy-specific beta-1-glycoprotein 13</fullName>
        <shortName>PS-beta-G-13</shortName>
        <shortName>PSBG-13</shortName>
        <shortName>Pregnancy-specific glycoprotein 13</shortName>
    </alternativeName>
</protein>
<sequence>MGPLSAPPCTEHIKWKGLLLTALLLNFWNLPTTAQVMIEAQPPKVSEGKDVLLLVHNLPQNLTGYIWYKGQIRDLYHYITSYVVDGQIIIYGPAYSGRETVYSNASLLIQNVTREDAGSYTLHIIKRGDGTRGVTGYFTFTLYLETPKPSISSSNLNPREAMETVILTCNPETPDASYLWWMNGQSLPMTHRMQLSETNRTLFLFGVTKYTAGPYECEIWNSGSASRSDPVTLNLLHGPDLPRIFPSVTSYYSGENLDLSCFANSNPPAQYSWTINGKFQLSGQKLFIPQITPKHNGLYACSARNSATGEESSTSLTIRVIAPPGLGTFAFNNPT</sequence>
<accession>Q9UQ72</accession>
<accession>Q13179</accession>
<accession>Q15242</accession>
<accession>Q8WW91</accession>
<accession>Q9UNE4</accession>
<name>PSG11_HUMAN</name>
<evidence type="ECO:0000255" key="1"/>
<evidence type="ECO:0000255" key="2">
    <source>
        <dbReference type="PROSITE-ProRule" id="PRU00114"/>
    </source>
</evidence>
<evidence type="ECO:0000269" key="3">
    <source>
    </source>
</evidence>
<evidence type="ECO:0000269" key="4">
    <source>
    </source>
</evidence>
<evidence type="ECO:0000269" key="5">
    <source ref="5"/>
</evidence>
<evidence type="ECO:0000303" key="6">
    <source>
    </source>
</evidence>
<evidence type="ECO:0000305" key="7"/>
<keyword id="KW-0025">Alternative splicing</keyword>
<keyword id="KW-1015">Disulfide bond</keyword>
<keyword id="KW-0325">Glycoprotein</keyword>
<keyword id="KW-0393">Immunoglobulin domain</keyword>
<keyword id="KW-1267">Proteomics identification</keyword>
<keyword id="KW-1185">Reference proteome</keyword>
<keyword id="KW-0677">Repeat</keyword>
<keyword id="KW-0964">Secreted</keyword>
<keyword id="KW-0732">Signal</keyword>
<proteinExistence type="evidence at protein level"/>
<reference key="1">
    <citation type="journal article" date="1991" name="Biochem. Biophys. Res. Commun.">
        <title>Cloning and expression of a new pregnancy-specific beta-1-glycoprotein member.</title>
        <authorList>
            <person name="Plouzek C.A."/>
            <person name="Watanabe S."/>
            <person name="Chou J.Y."/>
        </authorList>
    </citation>
    <scope>NUCLEOTIDE SEQUENCE [MRNA] (ISOFORM 1)</scope>
    <scope>VARIANT ASP-264</scope>
    <source>
        <tissue>Placenta</tissue>
    </source>
</reference>
<reference key="2">
    <citation type="journal article" date="1995" name="Biochem. Biophys. Res. Commun.">
        <title>Characterization of cDNA encoding novel pregnancy-specific glycoprotein variants.</title>
        <authorList>
            <person name="Teglund S."/>
            <person name="Zhou G.Q."/>
            <person name="Hammarstroem S."/>
        </authorList>
    </citation>
    <scope>NUCLEOTIDE SEQUENCE [GENOMIC DNA] (ISOFORM 2)</scope>
    <source>
        <tissue>Liver</tissue>
    </source>
</reference>
<reference key="3">
    <citation type="journal article" date="2004" name="Nature">
        <title>The DNA sequence and biology of human chromosome 19.</title>
        <authorList>
            <person name="Grimwood J."/>
            <person name="Gordon L.A."/>
            <person name="Olsen A.S."/>
            <person name="Terry A."/>
            <person name="Schmutz J."/>
            <person name="Lamerdin J.E."/>
            <person name="Hellsten U."/>
            <person name="Goodstein D."/>
            <person name="Couronne O."/>
            <person name="Tran-Gyamfi M."/>
            <person name="Aerts A."/>
            <person name="Altherr M."/>
            <person name="Ashworth L."/>
            <person name="Bajorek E."/>
            <person name="Black S."/>
            <person name="Branscomb E."/>
            <person name="Caenepeel S."/>
            <person name="Carrano A.V."/>
            <person name="Caoile C."/>
            <person name="Chan Y.M."/>
            <person name="Christensen M."/>
            <person name="Cleland C.A."/>
            <person name="Copeland A."/>
            <person name="Dalin E."/>
            <person name="Dehal P."/>
            <person name="Denys M."/>
            <person name="Detter J.C."/>
            <person name="Escobar J."/>
            <person name="Flowers D."/>
            <person name="Fotopulos D."/>
            <person name="Garcia C."/>
            <person name="Georgescu A.M."/>
            <person name="Glavina T."/>
            <person name="Gomez M."/>
            <person name="Gonzales E."/>
            <person name="Groza M."/>
            <person name="Hammon N."/>
            <person name="Hawkins T."/>
            <person name="Haydu L."/>
            <person name="Ho I."/>
            <person name="Huang W."/>
            <person name="Israni S."/>
            <person name="Jett J."/>
            <person name="Kadner K."/>
            <person name="Kimball H."/>
            <person name="Kobayashi A."/>
            <person name="Larionov V."/>
            <person name="Leem S.-H."/>
            <person name="Lopez F."/>
            <person name="Lou Y."/>
            <person name="Lowry S."/>
            <person name="Malfatti S."/>
            <person name="Martinez D."/>
            <person name="McCready P.M."/>
            <person name="Medina C."/>
            <person name="Morgan J."/>
            <person name="Nelson K."/>
            <person name="Nolan M."/>
            <person name="Ovcharenko I."/>
            <person name="Pitluck S."/>
            <person name="Pollard M."/>
            <person name="Popkie A.P."/>
            <person name="Predki P."/>
            <person name="Quan G."/>
            <person name="Ramirez L."/>
            <person name="Rash S."/>
            <person name="Retterer J."/>
            <person name="Rodriguez A."/>
            <person name="Rogers S."/>
            <person name="Salamov A."/>
            <person name="Salazar A."/>
            <person name="She X."/>
            <person name="Smith D."/>
            <person name="Slezak T."/>
            <person name="Solovyev V."/>
            <person name="Thayer N."/>
            <person name="Tice H."/>
            <person name="Tsai M."/>
            <person name="Ustaszewska A."/>
            <person name="Vo N."/>
            <person name="Wagner M."/>
            <person name="Wheeler J."/>
            <person name="Wu K."/>
            <person name="Xie G."/>
            <person name="Yang J."/>
            <person name="Dubchak I."/>
            <person name="Furey T.S."/>
            <person name="DeJong P."/>
            <person name="Dickson M."/>
            <person name="Gordon D."/>
            <person name="Eichler E.E."/>
            <person name="Pennacchio L.A."/>
            <person name="Richardson P."/>
            <person name="Stubbs L."/>
            <person name="Rokhsar D.S."/>
            <person name="Myers R.M."/>
            <person name="Rubin E.M."/>
            <person name="Lucas S.M."/>
        </authorList>
    </citation>
    <scope>NUCLEOTIDE SEQUENCE [LARGE SCALE GENOMIC DNA]</scope>
</reference>
<reference key="4">
    <citation type="journal article" date="2004" name="Genome Res.">
        <title>The status, quality, and expansion of the NIH full-length cDNA project: the Mammalian Gene Collection (MGC).</title>
        <authorList>
            <consortium name="The MGC Project Team"/>
        </authorList>
    </citation>
    <scope>NUCLEOTIDE SEQUENCE [LARGE SCALE MRNA] (ISOFORM 2)</scope>
    <scope>VARIANT ASP-264</scope>
    <source>
        <tissue>Placenta</tissue>
    </source>
</reference>
<reference key="5">
    <citation type="submission" date="1998-11" db="EMBL/GenBank/DDBJ databases">
        <title>Characterization of upstream promotor region, exon1 and exon2 of the PSG gene family.</title>
        <authorList>
            <person name="Fraengsmyr L."/>
            <person name="Teglund S."/>
            <person name="Israelsson A."/>
            <person name="Hammarstroem S."/>
        </authorList>
    </citation>
    <scope>NUCLEOTIDE SEQUENCE [GENOMIC DNA] OF 1-143</scope>
    <scope>VARIANT ILE-83</scope>
</reference>
<reference key="6">
    <citation type="submission" date="1999-02" db="EMBL/GenBank/DDBJ databases">
        <title>CGM15-PSG13 intergenic sequence.</title>
        <authorList>
            <person name="Fraengsmyr L."/>
            <person name="Teglund S."/>
            <person name="Israelsson A."/>
            <person name="Matsunaga T."/>
            <person name="Hammarstroem S."/>
        </authorList>
    </citation>
    <scope>NUCLEOTIDE SEQUENCE [GENOMIC DNA] OF 1-143</scope>
</reference>